<sequence>MTVTGIIAEFNPFHNGHKYLLETAEGLKIIAMSGNFMQRGEPALIDKWIRSEMALKNGADIVVELPFFVSVQSADYFAQGAIDILCQLGIQQLAFGTENVIDYQKLIKVYEKKSKQMTAYLSTLEDTLSYPQKTQKMWEIFAGVKFSGQTPNHILGLSYAKASAGKHIQLCPIKRQGAAYHSKDKNHLLASASAIRQHLNDWDFISHSVPNAGLLINNPHMSWDHYFSFLKYQILNHSDLTSIFQVNDELASRIKKAIKVSQNIDHLVDTVATKRYTKARVRRILIYILVNAKEPTLPKGIHILGFTSKGQAHLKKLKKSRPLITRIGAETWDEMTQKADSIYQLGHQDIPEQSFGRIPIIIKKERLN</sequence>
<feature type="chain" id="PRO_0000300198" description="tRNA(Met) cytidine acetate ligase">
    <location>
        <begin position="1"/>
        <end position="368"/>
    </location>
</feature>
<feature type="binding site" evidence="1">
    <location>
        <begin position="7"/>
        <end position="20"/>
    </location>
    <ligand>
        <name>ATP</name>
        <dbReference type="ChEBI" id="CHEBI:30616"/>
    </ligand>
</feature>
<feature type="binding site" evidence="1">
    <location>
        <position position="96"/>
    </location>
    <ligand>
        <name>ATP</name>
        <dbReference type="ChEBI" id="CHEBI:30616"/>
    </ligand>
</feature>
<feature type="binding site" evidence="1">
    <location>
        <position position="152"/>
    </location>
    <ligand>
        <name>ATP</name>
        <dbReference type="ChEBI" id="CHEBI:30616"/>
    </ligand>
</feature>
<feature type="binding site" evidence="1">
    <location>
        <position position="175"/>
    </location>
    <ligand>
        <name>ATP</name>
        <dbReference type="ChEBI" id="CHEBI:30616"/>
    </ligand>
</feature>
<name>TMCAL_STRPF</name>
<protein>
    <recommendedName>
        <fullName evidence="1">tRNA(Met) cytidine acetate ligase</fullName>
        <ecNumber evidence="1">6.3.4.-</ecNumber>
    </recommendedName>
</protein>
<reference key="1">
    <citation type="journal article" date="2006" name="Proc. Natl. Acad. Sci. U.S.A.">
        <title>Molecular genetic anatomy of inter- and intraserotype variation in the human bacterial pathogen group A Streptococcus.</title>
        <authorList>
            <person name="Beres S.B."/>
            <person name="Richter E.W."/>
            <person name="Nagiec M.J."/>
            <person name="Sumby P."/>
            <person name="Porcella S.F."/>
            <person name="DeLeo F.R."/>
            <person name="Musser J.M."/>
        </authorList>
    </citation>
    <scope>NUCLEOTIDE SEQUENCE [LARGE SCALE GENOMIC DNA]</scope>
    <source>
        <strain>MGAS10750</strain>
    </source>
</reference>
<keyword id="KW-0067">ATP-binding</keyword>
<keyword id="KW-0963">Cytoplasm</keyword>
<keyword id="KW-0436">Ligase</keyword>
<keyword id="KW-0547">Nucleotide-binding</keyword>
<keyword id="KW-0694">RNA-binding</keyword>
<keyword id="KW-0819">tRNA processing</keyword>
<keyword id="KW-0820">tRNA-binding</keyword>
<comment type="function">
    <text evidence="1">Catalyzes the formation of N(4)-acetylcytidine (ac(4)C) at the wobble position of elongator tRNA(Met), using acetate and ATP as substrates. First activates an acetate ion to form acetyladenylate (Ac-AMP) and then transfers the acetyl group to tRNA to form ac(4)C34.</text>
</comment>
<comment type="catalytic activity">
    <reaction evidence="1">
        <text>cytidine(34) in elongator tRNA(Met) + acetate + ATP = N(4)-acetylcytidine(34) in elongator tRNA(Met) + AMP + diphosphate</text>
        <dbReference type="Rhea" id="RHEA:58144"/>
        <dbReference type="Rhea" id="RHEA-COMP:10693"/>
        <dbReference type="Rhea" id="RHEA-COMP:10694"/>
        <dbReference type="ChEBI" id="CHEBI:30089"/>
        <dbReference type="ChEBI" id="CHEBI:30616"/>
        <dbReference type="ChEBI" id="CHEBI:33019"/>
        <dbReference type="ChEBI" id="CHEBI:74900"/>
        <dbReference type="ChEBI" id="CHEBI:82748"/>
        <dbReference type="ChEBI" id="CHEBI:456215"/>
    </reaction>
</comment>
<comment type="subcellular location">
    <subcellularLocation>
        <location evidence="1">Cytoplasm</location>
    </subcellularLocation>
</comment>
<comment type="similarity">
    <text evidence="1">Belongs to the TmcAL family.</text>
</comment>
<gene>
    <name evidence="1" type="primary">tmcAL</name>
    <name type="ordered locus">MGAS10750_Spy0262</name>
</gene>
<evidence type="ECO:0000255" key="1">
    <source>
        <dbReference type="HAMAP-Rule" id="MF_01539"/>
    </source>
</evidence>
<organism>
    <name type="scientific">Streptococcus pyogenes serotype M4 (strain MGAS10750)</name>
    <dbReference type="NCBI Taxonomy" id="370554"/>
    <lineage>
        <taxon>Bacteria</taxon>
        <taxon>Bacillati</taxon>
        <taxon>Bacillota</taxon>
        <taxon>Bacilli</taxon>
        <taxon>Lactobacillales</taxon>
        <taxon>Streptococcaceae</taxon>
        <taxon>Streptococcus</taxon>
    </lineage>
</organism>
<dbReference type="EC" id="6.3.4.-" evidence="1"/>
<dbReference type="EMBL" id="CP000262">
    <property type="protein sequence ID" value="ABF37212.1"/>
    <property type="molecule type" value="Genomic_DNA"/>
</dbReference>
<dbReference type="SMR" id="Q1J8E9"/>
<dbReference type="KEGG" id="spi:MGAS10750_Spy0262"/>
<dbReference type="HOGENOM" id="CLU_038915_0_2_9"/>
<dbReference type="Proteomes" id="UP000002434">
    <property type="component" value="Chromosome"/>
</dbReference>
<dbReference type="GO" id="GO:0005737">
    <property type="term" value="C:cytoplasm"/>
    <property type="evidence" value="ECO:0007669"/>
    <property type="project" value="UniProtKB-SubCell"/>
</dbReference>
<dbReference type="GO" id="GO:0005524">
    <property type="term" value="F:ATP binding"/>
    <property type="evidence" value="ECO:0007669"/>
    <property type="project" value="UniProtKB-KW"/>
</dbReference>
<dbReference type="GO" id="GO:0016879">
    <property type="term" value="F:ligase activity, forming carbon-nitrogen bonds"/>
    <property type="evidence" value="ECO:0007669"/>
    <property type="project" value="UniProtKB-UniRule"/>
</dbReference>
<dbReference type="GO" id="GO:0000049">
    <property type="term" value="F:tRNA binding"/>
    <property type="evidence" value="ECO:0007669"/>
    <property type="project" value="UniProtKB-KW"/>
</dbReference>
<dbReference type="GO" id="GO:0006400">
    <property type="term" value="P:tRNA modification"/>
    <property type="evidence" value="ECO:0007669"/>
    <property type="project" value="UniProtKB-UniRule"/>
</dbReference>
<dbReference type="Gene3D" id="3.40.50.620">
    <property type="entry name" value="HUPs"/>
    <property type="match status" value="1"/>
</dbReference>
<dbReference type="HAMAP" id="MF_01539">
    <property type="entry name" value="TmcAL"/>
    <property type="match status" value="1"/>
</dbReference>
<dbReference type="InterPro" id="IPR014729">
    <property type="entry name" value="Rossmann-like_a/b/a_fold"/>
</dbReference>
<dbReference type="InterPro" id="IPR008513">
    <property type="entry name" value="tRNA(Met)_cyd_acetate_ligase"/>
</dbReference>
<dbReference type="NCBIfam" id="NF010191">
    <property type="entry name" value="PRK13670.1"/>
    <property type="match status" value="1"/>
</dbReference>
<dbReference type="PANTHER" id="PTHR37825">
    <property type="entry name" value="TRNA(MET) CYTIDINE ACETATE LIGASE"/>
    <property type="match status" value="1"/>
</dbReference>
<dbReference type="PANTHER" id="PTHR37825:SF1">
    <property type="entry name" value="TRNA(MET) CYTIDINE ACETATE LIGASE"/>
    <property type="match status" value="1"/>
</dbReference>
<dbReference type="Pfam" id="PF05636">
    <property type="entry name" value="HIGH_NTase1"/>
    <property type="match status" value="1"/>
</dbReference>
<dbReference type="SUPFAM" id="SSF52374">
    <property type="entry name" value="Nucleotidylyl transferase"/>
    <property type="match status" value="1"/>
</dbReference>
<proteinExistence type="inferred from homology"/>
<accession>Q1J8E9</accession>